<keyword id="KW-0903">Direct protein sequencing</keyword>
<keyword id="KW-0378">Hydrolase</keyword>
<keyword id="KW-0574">Periplasm</keyword>
<evidence type="ECO:0000250" key="1"/>
<evidence type="ECO:0000250" key="2">
    <source>
        <dbReference type="UniProtKB" id="O68897"/>
    </source>
</evidence>
<evidence type="ECO:0000255" key="3">
    <source>
        <dbReference type="PROSITE-ProRule" id="PRU01068"/>
    </source>
</evidence>
<evidence type="ECO:0000255" key="4">
    <source>
        <dbReference type="PROSITE-ProRule" id="PRU10099"/>
    </source>
</evidence>
<evidence type="ECO:0000269" key="5">
    <source>
    </source>
</evidence>
<evidence type="ECO:0000305" key="6"/>
<sequence length="33" mass="3099">NVVVLATGGTIAGAGTNAFASQXGPLGMVVEGK</sequence>
<accession>P83712</accession>
<proteinExistence type="evidence at protein level"/>
<reference evidence="6" key="1">
    <citation type="submission" date="2003-11" db="UniProtKB">
        <title>Responses of Delftia acidovorans MC1 to chlorophenoxy herbicides and mechanisms of long-term adaptation.</title>
        <authorList>
            <person name="Benndorf D."/>
            <person name="Davidson I."/>
            <person name="Babel W."/>
        </authorList>
    </citation>
    <scope>PROTEIN SEQUENCE</scope>
    <source>
        <strain evidence="6">MC1</strain>
    </source>
</reference>
<reference evidence="6" key="2">
    <citation type="journal article" date="2004" name="Microbiology">
        <title>Regulation of catabolic enzymes during long-term exposure of Delftia acidovorans MC1 to chlorophenoxy herbicides.</title>
        <authorList>
            <person name="Benndorf D."/>
            <person name="Davidson I."/>
            <person name="Babel W."/>
        </authorList>
    </citation>
    <scope>PROTEIN SEQUENCE OF 1-15</scope>
    <scope>REPRESSION BY 2,4-DCPP</scope>
    <source>
        <strain evidence="5">MC1</strain>
    </source>
</reference>
<organism evidence="6">
    <name type="scientific">Delftia acidovorans</name>
    <name type="common">Pseudomonas acidovorans</name>
    <name type="synonym">Comamonas acidovorans</name>
    <dbReference type="NCBI Taxonomy" id="80866"/>
    <lineage>
        <taxon>Bacteria</taxon>
        <taxon>Pseudomonadati</taxon>
        <taxon>Pseudomonadota</taxon>
        <taxon>Betaproteobacteria</taxon>
        <taxon>Burkholderiales</taxon>
        <taxon>Comamonadaceae</taxon>
        <taxon>Delftia</taxon>
    </lineage>
</organism>
<protein>
    <recommendedName>
        <fullName>Glutaminase-asparaginase</fullName>
        <ecNumber>3.5.1.38</ecNumber>
    </recommendedName>
    <alternativeName>
        <fullName>L-ASNase/L-GLNase</fullName>
    </alternativeName>
    <alternativeName>
        <fullName>L-asparagine/L-glutamine amidohydrolase</fullName>
    </alternativeName>
</protein>
<comment type="catalytic activity">
    <reaction>
        <text>L-glutamine + H2O = L-glutamate + NH4(+)</text>
        <dbReference type="Rhea" id="RHEA:15889"/>
        <dbReference type="ChEBI" id="CHEBI:15377"/>
        <dbReference type="ChEBI" id="CHEBI:28938"/>
        <dbReference type="ChEBI" id="CHEBI:29985"/>
        <dbReference type="ChEBI" id="CHEBI:58359"/>
        <dbReference type="EC" id="3.5.1.38"/>
    </reaction>
</comment>
<comment type="catalytic activity">
    <reaction evidence="2">
        <text>L-asparagine + H2O = L-aspartate + NH4(+)</text>
        <dbReference type="Rhea" id="RHEA:21016"/>
        <dbReference type="ChEBI" id="CHEBI:15377"/>
        <dbReference type="ChEBI" id="CHEBI:28938"/>
        <dbReference type="ChEBI" id="CHEBI:29991"/>
        <dbReference type="ChEBI" id="CHEBI:58048"/>
        <dbReference type="EC" id="3.5.1.38"/>
    </reaction>
</comment>
<comment type="subunit">
    <text evidence="1">Homotetramer.</text>
</comment>
<comment type="subcellular location">
    <subcellularLocation>
        <location evidence="1">Periplasm</location>
    </subcellularLocation>
</comment>
<comment type="induction">
    <text evidence="5">Repressed during growth on high concentrations of 2,4-dichlorophenoxypropionic acid (2,4-DCPP).</text>
</comment>
<comment type="similarity">
    <text evidence="6">Belongs to the asparaginase 1 family.</text>
</comment>
<dbReference type="EC" id="3.5.1.38"/>
<dbReference type="GO" id="GO:0042597">
    <property type="term" value="C:periplasmic space"/>
    <property type="evidence" value="ECO:0007669"/>
    <property type="project" value="UniProtKB-SubCell"/>
</dbReference>
<dbReference type="GO" id="GO:0004067">
    <property type="term" value="F:asparaginase activity"/>
    <property type="evidence" value="ECO:0007669"/>
    <property type="project" value="RHEA"/>
</dbReference>
<dbReference type="GO" id="GO:0050417">
    <property type="term" value="F:glutamin-(asparagin-)ase activity"/>
    <property type="evidence" value="ECO:0007669"/>
    <property type="project" value="UniProtKB-EC"/>
</dbReference>
<dbReference type="GO" id="GO:0004359">
    <property type="term" value="F:glutaminase activity"/>
    <property type="evidence" value="ECO:0007669"/>
    <property type="project" value="RHEA"/>
</dbReference>
<dbReference type="GO" id="GO:0006520">
    <property type="term" value="P:amino acid metabolic process"/>
    <property type="evidence" value="ECO:0007669"/>
    <property type="project" value="InterPro"/>
</dbReference>
<dbReference type="InterPro" id="IPR006034">
    <property type="entry name" value="Asparaginase/glutaminase-like"/>
</dbReference>
<dbReference type="InterPro" id="IPR020827">
    <property type="entry name" value="Asparaginase/glutaminase_AS1"/>
</dbReference>
<dbReference type="PROSITE" id="PS00144">
    <property type="entry name" value="ASN_GLN_ASE_1"/>
    <property type="match status" value="1"/>
</dbReference>
<dbReference type="PROSITE" id="PS51732">
    <property type="entry name" value="ASN_GLN_ASE_3"/>
    <property type="match status" value="1"/>
</dbReference>
<gene>
    <name type="primary">ansB</name>
</gene>
<feature type="chain" id="PRO_0000171088" description="Glutaminase-asparaginase">
    <location>
        <begin position="1" status="less than"/>
        <end position="33" status="greater than"/>
    </location>
</feature>
<feature type="domain" description="Asparaginase/glutaminase" evidence="3">
    <location>
        <begin position="1" status="less than"/>
        <end position="33" status="greater than"/>
    </location>
</feature>
<feature type="active site" description="Acyl-ester intermediate" evidence="4">
    <location>
        <position position="10"/>
    </location>
</feature>
<feature type="non-consecutive residues" evidence="6">
    <location>
        <begin position="15"/>
        <end position="16"/>
    </location>
</feature>
<feature type="non-terminal residue">
    <location>
        <position position="1"/>
    </location>
</feature>
<feature type="non-terminal residue" evidence="6">
    <location>
        <position position="33"/>
    </location>
</feature>
<name>ASPQ_DELAC</name>